<gene>
    <name evidence="7" type="primary">LIP1</name>
    <name evidence="10" type="ordered locus">At5g16500</name>
    <name evidence="12" type="ORF">MQK4.24</name>
</gene>
<name>LIPG1_ARATH</name>
<evidence type="ECO:0000250" key="1">
    <source>
        <dbReference type="UniProtKB" id="O48814"/>
    </source>
</evidence>
<evidence type="ECO:0000255" key="2"/>
<evidence type="ECO:0000255" key="3">
    <source>
        <dbReference type="PROSITE-ProRule" id="PRU00159"/>
    </source>
</evidence>
<evidence type="ECO:0000256" key="4">
    <source>
        <dbReference type="SAM" id="MobiDB-lite"/>
    </source>
</evidence>
<evidence type="ECO:0000269" key="5">
    <source>
    </source>
</evidence>
<evidence type="ECO:0000269" key="6">
    <source>
    </source>
</evidence>
<evidence type="ECO:0000303" key="7">
    <source>
    </source>
</evidence>
<evidence type="ECO:0000305" key="8"/>
<evidence type="ECO:0000305" key="9">
    <source>
    </source>
</evidence>
<evidence type="ECO:0000312" key="10">
    <source>
        <dbReference type="Araport" id="AT5G16500"/>
    </source>
</evidence>
<evidence type="ECO:0000312" key="11">
    <source>
        <dbReference type="EMBL" id="ABE66160.1"/>
    </source>
</evidence>
<evidence type="ECO:0000312" key="12">
    <source>
        <dbReference type="EMBL" id="BAB09618.1"/>
    </source>
</evidence>
<reference key="1">
    <citation type="journal article" date="1997" name="DNA Res.">
        <title>Structural analysis of Arabidopsis thaliana chromosome 5. I. Sequence features of the 1.6 Mb regions covered by twenty physically assigned P1 clones.</title>
        <authorList>
            <person name="Sato S."/>
            <person name="Kotani H."/>
            <person name="Nakamura Y."/>
            <person name="Kaneko T."/>
            <person name="Asamizu E."/>
            <person name="Fukami M."/>
            <person name="Miyajima N."/>
            <person name="Tabata S."/>
        </authorList>
    </citation>
    <scope>NUCLEOTIDE SEQUENCE [LARGE SCALE GENOMIC DNA]</scope>
</reference>
<reference key="2">
    <citation type="journal article" date="2017" name="Plant J.">
        <title>Araport11: a complete reannotation of the Arabidopsis thaliana reference genome.</title>
        <authorList>
            <person name="Cheng C.Y."/>
            <person name="Krishnakumar V."/>
            <person name="Chan A.P."/>
            <person name="Thibaud-Nissen F."/>
            <person name="Schobel S."/>
            <person name="Town C.D."/>
        </authorList>
    </citation>
    <scope>GENOME REANNOTATION</scope>
    <source>
        <strain>cv. Columbia</strain>
    </source>
</reference>
<reference key="3">
    <citation type="journal article" date="2006" name="Plant Biotechnol. J.">
        <title>Simultaneous high-throughput recombinational cloning of open reading frames in closed and open configurations.</title>
        <authorList>
            <person name="Underwood B.A."/>
            <person name="Vanderhaeghen R."/>
            <person name="Whitford R."/>
            <person name="Town C.D."/>
            <person name="Hilson P."/>
        </authorList>
    </citation>
    <scope>NUCLEOTIDE SEQUENCE [LARGE SCALE MRNA]</scope>
    <source>
        <strain>cv. Columbia</strain>
    </source>
</reference>
<reference key="4">
    <citation type="journal article" date="2013" name="Curr. Biol.">
        <title>Membrane-bound RLCKs LIP1 and LIP2 are essential male factors controlling male-female attraction in Arabidopsis.</title>
        <authorList>
            <person name="Liu J."/>
            <person name="Zhong S."/>
            <person name="Guo X."/>
            <person name="Hao L."/>
            <person name="Wei X."/>
            <person name="Huang Q."/>
            <person name="Hou Y."/>
            <person name="Shi J."/>
            <person name="Wang C."/>
            <person name="Gu H."/>
            <person name="Qu L.J."/>
        </authorList>
    </citation>
    <scope>FUNCTION</scope>
    <scope>TISSUE SPECIFICITY</scope>
    <scope>SUBCELLULAR LOCATION</scope>
    <scope>DISRUPTION PHENOTYPE</scope>
    <scope>MUTAGENESIS OF CYS-7 AND CYS-10</scope>
    <scope>PALMITOYLATION</scope>
</reference>
<reference key="5">
    <citation type="journal article" date="2016" name="Nature">
        <title>Tip-localized receptors control pollen tube growth and LURE sensing in Arabidopsis.</title>
        <authorList>
            <person name="Takeuchi H."/>
            <person name="Higashiyama T."/>
        </authorList>
    </citation>
    <scope>INTERACTION WITH PRK6</scope>
</reference>
<keyword id="KW-0067">ATP-binding</keyword>
<keyword id="KW-1003">Cell membrane</keyword>
<keyword id="KW-0175">Coiled coil</keyword>
<keyword id="KW-0963">Cytoplasm</keyword>
<keyword id="KW-0418">Kinase</keyword>
<keyword id="KW-0449">Lipoprotein</keyword>
<keyword id="KW-0472">Membrane</keyword>
<keyword id="KW-0547">Nucleotide-binding</keyword>
<keyword id="KW-0597">Phosphoprotein</keyword>
<keyword id="KW-1185">Reference proteome</keyword>
<keyword id="KW-0723">Serine/threonine-protein kinase</keyword>
<keyword id="KW-0808">Transferase</keyword>
<protein>
    <recommendedName>
        <fullName evidence="7">Receptor-like kinase LIP1</fullName>
        <ecNumber evidence="3">2.7.11.-</ecNumber>
    </recommendedName>
    <alternativeName>
        <fullName evidence="7">Protein LOST IN POLLEN TUBE GUIDANCE 1</fullName>
        <shortName evidence="7">AtLIP1</shortName>
    </alternativeName>
</protein>
<dbReference type="EC" id="2.7.11.-" evidence="3"/>
<dbReference type="EMBL" id="AB005242">
    <property type="protein sequence ID" value="BAB09618.1"/>
    <property type="status" value="ALT_SEQ"/>
    <property type="molecule type" value="Genomic_DNA"/>
</dbReference>
<dbReference type="EMBL" id="CP002688">
    <property type="protein sequence ID" value="AED92301.1"/>
    <property type="molecule type" value="Genomic_DNA"/>
</dbReference>
<dbReference type="EMBL" id="DQ446955">
    <property type="protein sequence ID" value="ABE66160.1"/>
    <property type="molecule type" value="mRNA"/>
</dbReference>
<dbReference type="RefSeq" id="NP_197154.2">
    <property type="nucleotide sequence ID" value="NM_121655.3"/>
</dbReference>
<dbReference type="SMR" id="Q1PDW3"/>
<dbReference type="FunCoup" id="Q1PDW3">
    <property type="interactions" value="247"/>
</dbReference>
<dbReference type="STRING" id="3702.Q1PDW3"/>
<dbReference type="iPTMnet" id="Q1PDW3"/>
<dbReference type="PaxDb" id="3702-AT5G16500.1"/>
<dbReference type="ProteomicsDB" id="238383"/>
<dbReference type="EnsemblPlants" id="AT5G16500.1">
    <property type="protein sequence ID" value="AT5G16500.1"/>
    <property type="gene ID" value="AT5G16500"/>
</dbReference>
<dbReference type="GeneID" id="831511"/>
<dbReference type="Gramene" id="AT5G16500.1">
    <property type="protein sequence ID" value="AT5G16500.1"/>
    <property type="gene ID" value="AT5G16500"/>
</dbReference>
<dbReference type="KEGG" id="ath:AT5G16500"/>
<dbReference type="Araport" id="AT5G16500"/>
<dbReference type="TAIR" id="AT5G16500">
    <property type="gene designation" value="LIP1"/>
</dbReference>
<dbReference type="eggNOG" id="KOG1187">
    <property type="taxonomic scope" value="Eukaryota"/>
</dbReference>
<dbReference type="HOGENOM" id="CLU_000288_21_0_1"/>
<dbReference type="InParanoid" id="Q1PDW3"/>
<dbReference type="OMA" id="NTSMRIN"/>
<dbReference type="PhylomeDB" id="Q1PDW3"/>
<dbReference type="PRO" id="PR:Q1PDW3"/>
<dbReference type="Proteomes" id="UP000006548">
    <property type="component" value="Chromosome 5"/>
</dbReference>
<dbReference type="ExpressionAtlas" id="Q1PDW3">
    <property type="expression patterns" value="baseline and differential"/>
</dbReference>
<dbReference type="GO" id="GO:0005737">
    <property type="term" value="C:cytoplasm"/>
    <property type="evidence" value="ECO:0000314"/>
    <property type="project" value="TAIR"/>
</dbReference>
<dbReference type="GO" id="GO:0005886">
    <property type="term" value="C:plasma membrane"/>
    <property type="evidence" value="ECO:0000314"/>
    <property type="project" value="TAIR"/>
</dbReference>
<dbReference type="GO" id="GO:0090404">
    <property type="term" value="C:pollen tube tip"/>
    <property type="evidence" value="ECO:0000314"/>
    <property type="project" value="TAIR"/>
</dbReference>
<dbReference type="GO" id="GO:0005524">
    <property type="term" value="F:ATP binding"/>
    <property type="evidence" value="ECO:0007669"/>
    <property type="project" value="UniProtKB-KW"/>
</dbReference>
<dbReference type="GO" id="GO:0004674">
    <property type="term" value="F:protein serine/threonine kinase activity"/>
    <property type="evidence" value="ECO:0007669"/>
    <property type="project" value="UniProtKB-KW"/>
</dbReference>
<dbReference type="GO" id="GO:0010183">
    <property type="term" value="P:pollen tube guidance"/>
    <property type="evidence" value="ECO:0000316"/>
    <property type="project" value="TAIR"/>
</dbReference>
<dbReference type="CDD" id="cd14066">
    <property type="entry name" value="STKc_IRAK"/>
    <property type="match status" value="1"/>
</dbReference>
<dbReference type="FunFam" id="3.30.200.20:FF:000266">
    <property type="entry name" value="probable serine/threonine-protein kinase RLCKVII"/>
    <property type="match status" value="1"/>
</dbReference>
<dbReference type="FunFam" id="1.10.510.10:FF:000032">
    <property type="entry name" value="Serine/threonine-protein kinase PBS1"/>
    <property type="match status" value="1"/>
</dbReference>
<dbReference type="Gene3D" id="3.30.200.20">
    <property type="entry name" value="Phosphorylase Kinase, domain 1"/>
    <property type="match status" value="1"/>
</dbReference>
<dbReference type="Gene3D" id="1.10.510.10">
    <property type="entry name" value="Transferase(Phosphotransferase) domain 1"/>
    <property type="match status" value="1"/>
</dbReference>
<dbReference type="InterPro" id="IPR011009">
    <property type="entry name" value="Kinase-like_dom_sf"/>
</dbReference>
<dbReference type="InterPro" id="IPR000719">
    <property type="entry name" value="Prot_kinase_dom"/>
</dbReference>
<dbReference type="InterPro" id="IPR017441">
    <property type="entry name" value="Protein_kinase_ATP_BS"/>
</dbReference>
<dbReference type="InterPro" id="IPR008271">
    <property type="entry name" value="Ser/Thr_kinase_AS"/>
</dbReference>
<dbReference type="PANTHER" id="PTHR47985">
    <property type="entry name" value="OS07G0668900 PROTEIN"/>
    <property type="match status" value="1"/>
</dbReference>
<dbReference type="PANTHER" id="PTHR47985:SF77">
    <property type="entry name" value="RECEPTOR-LIKE KINASE LIP1"/>
    <property type="match status" value="1"/>
</dbReference>
<dbReference type="Pfam" id="PF00069">
    <property type="entry name" value="Pkinase"/>
    <property type="match status" value="1"/>
</dbReference>
<dbReference type="SMART" id="SM00220">
    <property type="entry name" value="S_TKc"/>
    <property type="match status" value="1"/>
</dbReference>
<dbReference type="SUPFAM" id="SSF56112">
    <property type="entry name" value="Protein kinase-like (PK-like)"/>
    <property type="match status" value="1"/>
</dbReference>
<dbReference type="PROSITE" id="PS00107">
    <property type="entry name" value="PROTEIN_KINASE_ATP"/>
    <property type="match status" value="1"/>
</dbReference>
<dbReference type="PROSITE" id="PS50011">
    <property type="entry name" value="PROTEIN_KINASE_DOM"/>
    <property type="match status" value="1"/>
</dbReference>
<dbReference type="PROSITE" id="PS00108">
    <property type="entry name" value="PROTEIN_KINASE_ST"/>
    <property type="match status" value="1"/>
</dbReference>
<organism evidence="11">
    <name type="scientific">Arabidopsis thaliana</name>
    <name type="common">Mouse-ear cress</name>
    <dbReference type="NCBI Taxonomy" id="3702"/>
    <lineage>
        <taxon>Eukaryota</taxon>
        <taxon>Viridiplantae</taxon>
        <taxon>Streptophyta</taxon>
        <taxon>Embryophyta</taxon>
        <taxon>Tracheophyta</taxon>
        <taxon>Spermatophyta</taxon>
        <taxon>Magnoliopsida</taxon>
        <taxon>eudicotyledons</taxon>
        <taxon>Gunneridae</taxon>
        <taxon>Pentapetalae</taxon>
        <taxon>rosids</taxon>
        <taxon>malvids</taxon>
        <taxon>Brassicales</taxon>
        <taxon>Brassicaceae</taxon>
        <taxon>Camelineae</taxon>
        <taxon>Arabidopsis</taxon>
    </lineage>
</organism>
<feature type="chain" id="PRO_0000436434" description="Receptor-like kinase LIP1">
    <location>
        <begin position="1"/>
        <end position="636"/>
    </location>
</feature>
<feature type="domain" description="Protein kinase" evidence="3">
    <location>
        <begin position="74"/>
        <end position="352"/>
    </location>
</feature>
<feature type="region of interest" description="Disordered" evidence="4">
    <location>
        <begin position="18"/>
        <end position="57"/>
    </location>
</feature>
<feature type="region of interest" description="Disordered" evidence="4">
    <location>
        <begin position="389"/>
        <end position="636"/>
    </location>
</feature>
<feature type="coiled-coil region" evidence="2">
    <location>
        <begin position="403"/>
        <end position="434"/>
    </location>
</feature>
<feature type="compositionally biased region" description="Basic and acidic residues" evidence="4">
    <location>
        <begin position="413"/>
        <end position="431"/>
    </location>
</feature>
<feature type="compositionally biased region" description="Acidic residues" evidence="4">
    <location>
        <begin position="432"/>
        <end position="455"/>
    </location>
</feature>
<feature type="compositionally biased region" description="Polar residues" evidence="4">
    <location>
        <begin position="480"/>
        <end position="489"/>
    </location>
</feature>
<feature type="compositionally biased region" description="Basic and acidic residues" evidence="4">
    <location>
        <begin position="522"/>
        <end position="531"/>
    </location>
</feature>
<feature type="compositionally biased region" description="Basic and acidic residues" evidence="4">
    <location>
        <begin position="554"/>
        <end position="566"/>
    </location>
</feature>
<feature type="compositionally biased region" description="Polar residues" evidence="4">
    <location>
        <begin position="567"/>
        <end position="576"/>
    </location>
</feature>
<feature type="compositionally biased region" description="Basic and acidic residues" evidence="4">
    <location>
        <begin position="588"/>
        <end position="603"/>
    </location>
</feature>
<feature type="compositionally biased region" description="Basic and acidic residues" evidence="4">
    <location>
        <begin position="619"/>
        <end position="636"/>
    </location>
</feature>
<feature type="active site" description="Proton acceptor" evidence="3">
    <location>
        <position position="201"/>
    </location>
</feature>
<feature type="binding site" evidence="3">
    <location>
        <begin position="80"/>
        <end position="88"/>
    </location>
    <ligand>
        <name>ATP</name>
        <dbReference type="ChEBI" id="CHEBI:30616"/>
    </ligand>
</feature>
<feature type="binding site" evidence="3">
    <location>
        <position position="103"/>
    </location>
    <ligand>
        <name>ATP</name>
        <dbReference type="ChEBI" id="CHEBI:30616"/>
    </ligand>
</feature>
<feature type="modified residue" description="Phosphoserine" evidence="1">
    <location>
        <position position="205"/>
    </location>
</feature>
<feature type="modified residue" description="Phosphoserine" evidence="1">
    <location>
        <position position="236"/>
    </location>
</feature>
<feature type="modified residue" description="Phosphothreonine" evidence="1">
    <location>
        <position position="242"/>
    </location>
</feature>
<feature type="modified residue" description="Phosphotyrosine" evidence="1">
    <location>
        <position position="250"/>
    </location>
</feature>
<feature type="mutagenesis site" description="Loss of membrane localization; when associated with S-10." evidence="5">
    <original>C</original>
    <variation>S</variation>
    <location>
        <position position="7"/>
    </location>
</feature>
<feature type="mutagenesis site" description="Loss of membrane localization; when associated with S-7." evidence="5">
    <original>C</original>
    <variation>S</variation>
    <location>
        <position position="10"/>
    </location>
</feature>
<comment type="function">
    <text evidence="5">Involved in pollen tube guidance into micropyle. Participates in perception of the ovule-secreted peptide signal LURE1.</text>
</comment>
<comment type="subunit">
    <text evidence="6">Interacts with PRK6.</text>
</comment>
<comment type="subcellular location">
    <subcellularLocation>
        <location evidence="5">Cell membrane</location>
        <topology evidence="9">Lipid-anchor</topology>
    </subcellularLocation>
    <subcellularLocation>
        <location evidence="5">Cytoplasm</location>
    </subcellularLocation>
    <text evidence="5">In pollen tubes, mainly located in the plasma membrane to the tip region.</text>
</comment>
<comment type="tissue specificity">
    <text evidence="5">Expressed in mature pollen and in germinating pollen tubes.</text>
</comment>
<comment type="PTM">
    <text evidence="9">Palmitoylated.</text>
</comment>
<comment type="disruption phenotype">
    <text evidence="5">No visible phenotype. Lip1 and lip2 double mutants have a reduced male transmission.</text>
</comment>
<comment type="similarity">
    <text evidence="3">Belongs to the protein kinase superfamily. Ser/Thr protein kinase family.</text>
</comment>
<comment type="sequence caution" evidence="8">
    <conflict type="erroneous gene model prediction">
        <sequence resource="EMBL-CDS" id="BAB09618"/>
    </conflict>
</comment>
<proteinExistence type="evidence at protein level"/>
<accession>Q1PDW3</accession>
<accession>Q9FFD4</accession>
<sequence length="636" mass="71552">MIIMMNCFPCFTSQKSRNAPCTTNETNDDNVEHDEFRPPVVATTKRTEEREPAEQQPPVKTFNFRELATATKNFRQECLLGEGGFGRVYKGTLQSTGQLVAVKQLDKHGLHGNKEFLAEVLSLAKLEHPNLVKLIGYCADGDQRLLVFEYVSGGSLQDHLYEQKPGQKPMDWITRMKIAFGAAQGLDYLHDKVTPAVIYRDLKASNILLDAEFYPKLCDFGLHNLEPGTGDSLFLSSRVMDTYGYSAPEYTRGDDLTVKSDVYSFGVVLLELITGRRAIDTTKPNDEQNLVAWAQPIFKDPKRYPDMADPLLRKNFSERGLNQAVAITSMCLQEEPTARPLISDVMVALSFLSMSTEDGIPATVPMESFRDKSMSIALSRHGSCSVTPFCISRKDVGNKSSSSSDSEDEEEEKEQKAEKEEESTSKKRQEQEETATDSDDESDSNSEKDQEEEQSQLEKARESSSSSSDSGSERRSIDETNATAQSLKISYSNYSSEEEDNEKLSSKSSCKSNEESTFSRYDSGRDHDDSSRNTSMRINSLAHDDKEEDEEENHETRSYSDHDDSPRNTSMRINSLSHDDDEEEEEENHQTRLEHIHSSKSEDQSVYSDDDAGESGESSLHRIEAKEEEHISSDHD</sequence>